<keyword id="KW-0067">ATP-binding</keyword>
<keyword id="KW-1003">Cell membrane</keyword>
<keyword id="KW-0472">Membrane</keyword>
<keyword id="KW-0547">Nucleotide-binding</keyword>
<keyword id="KW-1185">Reference proteome</keyword>
<keyword id="KW-1278">Translocase</keyword>
<keyword id="KW-0813">Transport</keyword>
<proteinExistence type="inferred from homology"/>
<comment type="function">
    <text evidence="1">ATP-binding (A) component of a common energy-coupling factor (ECF) ABC-transporter complex. Unlike classic ABC transporters this ECF transporter provides the energy necessary to transport a number of different substrates.</text>
</comment>
<comment type="subunit">
    <text evidence="1">Forms a stable energy-coupling factor (ECF) transporter complex composed of 2 membrane-embedded substrate-binding proteins (S component), 2 ATP-binding proteins (A component) and 2 transmembrane proteins (T component).</text>
</comment>
<comment type="subcellular location">
    <subcellularLocation>
        <location evidence="1">Cell membrane</location>
        <topology evidence="1">Peripheral membrane protein</topology>
    </subcellularLocation>
</comment>
<comment type="similarity">
    <text evidence="1">Belongs to the ABC transporter superfamily. Energy-coupling factor EcfA family.</text>
</comment>
<protein>
    <recommendedName>
        <fullName evidence="1">Energy-coupling factor transporter ATP-binding protein EcfA1</fullName>
        <shortName evidence="1">ECF transporter A component EcfA1</shortName>
        <ecNumber evidence="1">7.-.-.-</ecNumber>
    </recommendedName>
</protein>
<feature type="chain" id="PRO_0000092007" description="Energy-coupling factor transporter ATP-binding protein EcfA1">
    <location>
        <begin position="1"/>
        <end position="279"/>
    </location>
</feature>
<feature type="domain" description="ABC transporter" evidence="1">
    <location>
        <begin position="5"/>
        <end position="240"/>
    </location>
</feature>
<feature type="binding site" evidence="1">
    <location>
        <begin position="40"/>
        <end position="47"/>
    </location>
    <ligand>
        <name>ATP</name>
        <dbReference type="ChEBI" id="CHEBI:30616"/>
    </ligand>
</feature>
<organism>
    <name type="scientific">Enterococcus faecalis (strain ATCC 700802 / V583)</name>
    <dbReference type="NCBI Taxonomy" id="226185"/>
    <lineage>
        <taxon>Bacteria</taxon>
        <taxon>Bacillati</taxon>
        <taxon>Bacillota</taxon>
        <taxon>Bacilli</taxon>
        <taxon>Lactobacillales</taxon>
        <taxon>Enterococcaceae</taxon>
        <taxon>Enterococcus</taxon>
    </lineage>
</organism>
<sequence>MQPIIELNNIQFNYQPEDASPALKDVSFSIQQGEWVAIIGHNGSGKSTLAKTINGLLLPAAGTIKVGGKELNEANVWDIRRMVGMVFQNPDNQFVGSTVEDDVAFGLENQGIPRDEMVERVHDALERVRMLDFAKREPARLSGGQKQRVAIAGVVALRPDIIILDEATSMLDPEGRAEVIATIQKIKEESNLTVISITHDIDEAANANRILVMRQGQLTNEGTPEKIFSAGEALVEMGLDLPFPEKLKVALKERGVVVPTNYLTEEGMVDWLWTSVLNK</sequence>
<name>ECFA1_ENTFA</name>
<dbReference type="EC" id="7.-.-.-" evidence="1"/>
<dbReference type="EMBL" id="AE016830">
    <property type="protein sequence ID" value="AAO80105.1"/>
    <property type="molecule type" value="Genomic_DNA"/>
</dbReference>
<dbReference type="RefSeq" id="NP_814034.1">
    <property type="nucleotide sequence ID" value="NC_004668.1"/>
</dbReference>
<dbReference type="RefSeq" id="WP_002359354.1">
    <property type="nucleotide sequence ID" value="NZ_KE136524.1"/>
</dbReference>
<dbReference type="SMR" id="Q839D5"/>
<dbReference type="STRING" id="226185.EF_0237"/>
<dbReference type="TCDB" id="3.A.1.26.10">
    <property type="family name" value="the atp-binding cassette (abc) superfamily"/>
</dbReference>
<dbReference type="TCDB" id="3.A.1.26.7">
    <property type="family name" value="the atp-binding cassette (abc) superfamily"/>
</dbReference>
<dbReference type="EnsemblBacteria" id="AAO80105">
    <property type="protein sequence ID" value="AAO80105"/>
    <property type="gene ID" value="EF_0237"/>
</dbReference>
<dbReference type="KEGG" id="efa:EF0237"/>
<dbReference type="PATRIC" id="fig|226185.45.peg.30"/>
<dbReference type="eggNOG" id="COG1122">
    <property type="taxonomic scope" value="Bacteria"/>
</dbReference>
<dbReference type="HOGENOM" id="CLU_000604_1_22_9"/>
<dbReference type="Proteomes" id="UP000001415">
    <property type="component" value="Chromosome"/>
</dbReference>
<dbReference type="GO" id="GO:0043190">
    <property type="term" value="C:ATP-binding cassette (ABC) transporter complex"/>
    <property type="evidence" value="ECO:0007669"/>
    <property type="project" value="TreeGrafter"/>
</dbReference>
<dbReference type="GO" id="GO:0005524">
    <property type="term" value="F:ATP binding"/>
    <property type="evidence" value="ECO:0007669"/>
    <property type="project" value="UniProtKB-KW"/>
</dbReference>
<dbReference type="GO" id="GO:0016887">
    <property type="term" value="F:ATP hydrolysis activity"/>
    <property type="evidence" value="ECO:0007669"/>
    <property type="project" value="InterPro"/>
</dbReference>
<dbReference type="GO" id="GO:0042626">
    <property type="term" value="F:ATPase-coupled transmembrane transporter activity"/>
    <property type="evidence" value="ECO:0007669"/>
    <property type="project" value="TreeGrafter"/>
</dbReference>
<dbReference type="CDD" id="cd03225">
    <property type="entry name" value="ABC_cobalt_CbiO_domain1"/>
    <property type="match status" value="1"/>
</dbReference>
<dbReference type="FunFam" id="3.40.50.300:FF:000224">
    <property type="entry name" value="Energy-coupling factor transporter ATP-binding protein EcfA"/>
    <property type="match status" value="1"/>
</dbReference>
<dbReference type="Gene3D" id="3.40.50.300">
    <property type="entry name" value="P-loop containing nucleotide triphosphate hydrolases"/>
    <property type="match status" value="1"/>
</dbReference>
<dbReference type="InterPro" id="IPR003593">
    <property type="entry name" value="AAA+_ATPase"/>
</dbReference>
<dbReference type="InterPro" id="IPR003439">
    <property type="entry name" value="ABC_transporter-like_ATP-bd"/>
</dbReference>
<dbReference type="InterPro" id="IPR017871">
    <property type="entry name" value="ABC_transporter-like_CS"/>
</dbReference>
<dbReference type="InterPro" id="IPR015856">
    <property type="entry name" value="ABC_transpr_CbiO/EcfA_su"/>
</dbReference>
<dbReference type="InterPro" id="IPR050095">
    <property type="entry name" value="ECF_ABC_transporter_ATP-bd"/>
</dbReference>
<dbReference type="InterPro" id="IPR030947">
    <property type="entry name" value="EcfA_1"/>
</dbReference>
<dbReference type="InterPro" id="IPR027417">
    <property type="entry name" value="P-loop_NTPase"/>
</dbReference>
<dbReference type="NCBIfam" id="TIGR04520">
    <property type="entry name" value="ECF_ATPase_1"/>
    <property type="match status" value="1"/>
</dbReference>
<dbReference type="NCBIfam" id="NF010156">
    <property type="entry name" value="PRK13635.1"/>
    <property type="match status" value="1"/>
</dbReference>
<dbReference type="NCBIfam" id="NF010167">
    <property type="entry name" value="PRK13648.1"/>
    <property type="match status" value="1"/>
</dbReference>
<dbReference type="PANTHER" id="PTHR43553:SF24">
    <property type="entry name" value="ENERGY-COUPLING FACTOR TRANSPORTER ATP-BINDING PROTEIN ECFA1"/>
    <property type="match status" value="1"/>
</dbReference>
<dbReference type="PANTHER" id="PTHR43553">
    <property type="entry name" value="HEAVY METAL TRANSPORTER"/>
    <property type="match status" value="1"/>
</dbReference>
<dbReference type="Pfam" id="PF00005">
    <property type="entry name" value="ABC_tran"/>
    <property type="match status" value="1"/>
</dbReference>
<dbReference type="SMART" id="SM00382">
    <property type="entry name" value="AAA"/>
    <property type="match status" value="1"/>
</dbReference>
<dbReference type="SUPFAM" id="SSF52540">
    <property type="entry name" value="P-loop containing nucleoside triphosphate hydrolases"/>
    <property type="match status" value="1"/>
</dbReference>
<dbReference type="PROSITE" id="PS00211">
    <property type="entry name" value="ABC_TRANSPORTER_1"/>
    <property type="match status" value="1"/>
</dbReference>
<dbReference type="PROSITE" id="PS50893">
    <property type="entry name" value="ABC_TRANSPORTER_2"/>
    <property type="match status" value="1"/>
</dbReference>
<dbReference type="PROSITE" id="PS51246">
    <property type="entry name" value="CBIO"/>
    <property type="match status" value="1"/>
</dbReference>
<gene>
    <name evidence="1" type="primary">ecfA1</name>
    <name type="synonym">cbiO1</name>
    <name type="ordered locus">EF_0237</name>
</gene>
<evidence type="ECO:0000255" key="1">
    <source>
        <dbReference type="HAMAP-Rule" id="MF_01710"/>
    </source>
</evidence>
<reference key="1">
    <citation type="journal article" date="2003" name="Science">
        <title>Role of mobile DNA in the evolution of vancomycin-resistant Enterococcus faecalis.</title>
        <authorList>
            <person name="Paulsen I.T."/>
            <person name="Banerjei L."/>
            <person name="Myers G.S.A."/>
            <person name="Nelson K.E."/>
            <person name="Seshadri R."/>
            <person name="Read T.D."/>
            <person name="Fouts D.E."/>
            <person name="Eisen J.A."/>
            <person name="Gill S.R."/>
            <person name="Heidelberg J.F."/>
            <person name="Tettelin H."/>
            <person name="Dodson R.J."/>
            <person name="Umayam L.A."/>
            <person name="Brinkac L.M."/>
            <person name="Beanan M.J."/>
            <person name="Daugherty S.C."/>
            <person name="DeBoy R.T."/>
            <person name="Durkin S.A."/>
            <person name="Kolonay J.F."/>
            <person name="Madupu R."/>
            <person name="Nelson W.C."/>
            <person name="Vamathevan J.J."/>
            <person name="Tran B."/>
            <person name="Upton J."/>
            <person name="Hansen T."/>
            <person name="Shetty J."/>
            <person name="Khouri H.M."/>
            <person name="Utterback T.R."/>
            <person name="Radune D."/>
            <person name="Ketchum K.A."/>
            <person name="Dougherty B.A."/>
            <person name="Fraser C.M."/>
        </authorList>
    </citation>
    <scope>NUCLEOTIDE SEQUENCE [LARGE SCALE GENOMIC DNA]</scope>
    <source>
        <strain>ATCC 700802 / V583</strain>
    </source>
</reference>
<accession>Q839D5</accession>